<name>COMB_THEP1</name>
<proteinExistence type="inferred from homology"/>
<protein>
    <recommendedName>
        <fullName evidence="1">Probable 2-phosphosulfolactate phosphatase</fullName>
        <ecNumber evidence="1">3.1.3.71</ecNumber>
    </recommendedName>
</protein>
<sequence>MVDVVMAPCSPVECRTAVVIDVLRATSTIVTALSNGASGVIPVKTIEEALKKRKEGVLICGERNAQKPKGFDLGNSPLEYRKEKISGKTIVLTTTNGTQVIERIRSEEIIAASFLNLSAVVEYLKSKEDILLVCAGTNGRFSLEDFLLAGAVVKRLKRNDLGDGARAAERYFESVENTREEIKKHSSHAKRLISLGFEKDVEFCTTEDLFKTVPTLVNGVFILKEFP</sequence>
<dbReference type="EC" id="3.1.3.71" evidence="1"/>
<dbReference type="EMBL" id="CP000702">
    <property type="protein sequence ID" value="ABQ46160.1"/>
    <property type="molecule type" value="Genomic_DNA"/>
</dbReference>
<dbReference type="RefSeq" id="WP_011942830.1">
    <property type="nucleotide sequence ID" value="NC_009486.1"/>
</dbReference>
<dbReference type="SMR" id="A5IIY7"/>
<dbReference type="STRING" id="390874.Tpet_0131"/>
<dbReference type="KEGG" id="tpt:Tpet_0131"/>
<dbReference type="eggNOG" id="COG2045">
    <property type="taxonomic scope" value="Bacteria"/>
</dbReference>
<dbReference type="HOGENOM" id="CLU_070028_0_0_0"/>
<dbReference type="Proteomes" id="UP000006558">
    <property type="component" value="Chromosome"/>
</dbReference>
<dbReference type="GO" id="GO:0050532">
    <property type="term" value="F:2-phosphosulfolactate phosphatase activity"/>
    <property type="evidence" value="ECO:0007669"/>
    <property type="project" value="UniProtKB-UniRule"/>
</dbReference>
<dbReference type="GO" id="GO:0000287">
    <property type="term" value="F:magnesium ion binding"/>
    <property type="evidence" value="ECO:0007669"/>
    <property type="project" value="UniProtKB-UniRule"/>
</dbReference>
<dbReference type="GO" id="GO:0050545">
    <property type="term" value="F:sulfopyruvate decarboxylase activity"/>
    <property type="evidence" value="ECO:0007669"/>
    <property type="project" value="TreeGrafter"/>
</dbReference>
<dbReference type="FunFam" id="3.90.1560.10:FF:000001">
    <property type="entry name" value="Probable 2-phosphosulfolactate phosphatase"/>
    <property type="match status" value="1"/>
</dbReference>
<dbReference type="Gene3D" id="3.90.1560.10">
    <property type="entry name" value="ComB-like"/>
    <property type="match status" value="1"/>
</dbReference>
<dbReference type="HAMAP" id="MF_00490">
    <property type="entry name" value="ComB"/>
    <property type="match status" value="1"/>
</dbReference>
<dbReference type="InterPro" id="IPR005238">
    <property type="entry name" value="ComB-like"/>
</dbReference>
<dbReference type="InterPro" id="IPR036702">
    <property type="entry name" value="ComB-like_sf"/>
</dbReference>
<dbReference type="NCBIfam" id="NF002057">
    <property type="entry name" value="PRK00886.1-6"/>
    <property type="match status" value="1"/>
</dbReference>
<dbReference type="PANTHER" id="PTHR37311">
    <property type="entry name" value="2-PHOSPHOSULFOLACTATE PHOSPHATASE-RELATED"/>
    <property type="match status" value="1"/>
</dbReference>
<dbReference type="PANTHER" id="PTHR37311:SF1">
    <property type="entry name" value="2-PHOSPHOSULFOLACTATE PHOSPHATASE-RELATED"/>
    <property type="match status" value="1"/>
</dbReference>
<dbReference type="Pfam" id="PF04029">
    <property type="entry name" value="2-ph_phosp"/>
    <property type="match status" value="1"/>
</dbReference>
<dbReference type="SUPFAM" id="SSF142823">
    <property type="entry name" value="ComB-like"/>
    <property type="match status" value="1"/>
</dbReference>
<gene>
    <name evidence="1" type="primary">comB</name>
    <name type="ordered locus">Tpet_0131</name>
</gene>
<evidence type="ECO:0000255" key="1">
    <source>
        <dbReference type="HAMAP-Rule" id="MF_00490"/>
    </source>
</evidence>
<organism>
    <name type="scientific">Thermotoga petrophila (strain ATCC BAA-488 / DSM 13995 / JCM 10881 / RKU-1)</name>
    <dbReference type="NCBI Taxonomy" id="390874"/>
    <lineage>
        <taxon>Bacteria</taxon>
        <taxon>Thermotogati</taxon>
        <taxon>Thermotogota</taxon>
        <taxon>Thermotogae</taxon>
        <taxon>Thermotogales</taxon>
        <taxon>Thermotogaceae</taxon>
        <taxon>Thermotoga</taxon>
    </lineage>
</organism>
<accession>A5IIY7</accession>
<reference key="1">
    <citation type="submission" date="2007-05" db="EMBL/GenBank/DDBJ databases">
        <title>Complete sequence of Thermotoga petrophila RKU-1.</title>
        <authorList>
            <consortium name="US DOE Joint Genome Institute"/>
            <person name="Copeland A."/>
            <person name="Lucas S."/>
            <person name="Lapidus A."/>
            <person name="Barry K."/>
            <person name="Glavina del Rio T."/>
            <person name="Dalin E."/>
            <person name="Tice H."/>
            <person name="Pitluck S."/>
            <person name="Sims D."/>
            <person name="Brettin T."/>
            <person name="Bruce D."/>
            <person name="Detter J.C."/>
            <person name="Han C."/>
            <person name="Tapia R."/>
            <person name="Schmutz J."/>
            <person name="Larimer F."/>
            <person name="Land M."/>
            <person name="Hauser L."/>
            <person name="Kyrpides N."/>
            <person name="Mikhailova N."/>
            <person name="Nelson K."/>
            <person name="Gogarten J.P."/>
            <person name="Noll K."/>
            <person name="Richardson P."/>
        </authorList>
    </citation>
    <scope>NUCLEOTIDE SEQUENCE [LARGE SCALE GENOMIC DNA]</scope>
    <source>
        <strain>ATCC BAA-488 / DSM 13995 / JCM 10881 / RKU-1</strain>
    </source>
</reference>
<feature type="chain" id="PRO_1000014476" description="Probable 2-phosphosulfolactate phosphatase">
    <location>
        <begin position="1"/>
        <end position="227"/>
    </location>
</feature>
<comment type="catalytic activity">
    <reaction evidence="1">
        <text>(2R)-O-phospho-3-sulfolactate + H2O = (2R)-3-sulfolactate + phosphate</text>
        <dbReference type="Rhea" id="RHEA:23416"/>
        <dbReference type="ChEBI" id="CHEBI:15377"/>
        <dbReference type="ChEBI" id="CHEBI:15597"/>
        <dbReference type="ChEBI" id="CHEBI:43474"/>
        <dbReference type="ChEBI" id="CHEBI:58738"/>
        <dbReference type="EC" id="3.1.3.71"/>
    </reaction>
</comment>
<comment type="cofactor">
    <cofactor evidence="1">
        <name>Mg(2+)</name>
        <dbReference type="ChEBI" id="CHEBI:18420"/>
    </cofactor>
</comment>
<comment type="similarity">
    <text evidence="1">Belongs to the ComB family.</text>
</comment>
<keyword id="KW-0378">Hydrolase</keyword>
<keyword id="KW-0460">Magnesium</keyword>